<gene>
    <name type="primary">Ccp84Ab</name>
    <name type="ORF">AGAP001666</name>
</gene>
<sequence length="245" mass="25284">MAFKFVIFAAVVAVARAGLIASPAVSYAAAPALVAAPVAKVAYAAAPIAKVAYAAQPEEYDANPHYSFSYGISDALTGDSKSQQESRSGDVVQGSYSVVDPDGTKRTVDYTADPHNGFNAVVRREPLAAKTIVAAAPVATKVIAQPAVAYAAPVAKTISYAAPVATKTYVAQPALSYAAPLTKTYVSQPALSYAAPVAKTISYSAPLATKTYVSQPAISYAAPLAKTYVSQPALSYAAPAYAYHH</sequence>
<proteinExistence type="evidence at transcript level"/>
<feature type="chain" id="PRO_0000196128" description="Cuticle protein">
    <location>
        <begin position="1"/>
        <end position="245"/>
    </location>
</feature>
<feature type="domain" description="Chitin-binding type R&amp;R" evidence="1">
    <location>
        <begin position="25"/>
        <end position="86"/>
    </location>
</feature>
<feature type="repeat" description="1">
    <location>
        <begin position="92"/>
        <end position="95"/>
    </location>
</feature>
<feature type="repeat" description="2">
    <location>
        <begin position="108"/>
        <end position="111"/>
    </location>
</feature>
<feature type="repeat" description="3">
    <location>
        <begin position="118"/>
        <end position="121"/>
    </location>
</feature>
<feature type="region of interest" description="Disordered" evidence="2">
    <location>
        <begin position="79"/>
        <end position="100"/>
    </location>
</feature>
<feature type="sequence conflict" description="In Ref. 2; AAA93473." evidence="3" ref="2">
    <original>L</original>
    <variation>Y</variation>
    <location>
        <position position="33"/>
    </location>
</feature>
<feature type="sequence conflict" description="In Ref. 2; AAA93473." evidence="3" ref="2">
    <original>H</original>
    <variation>Q</variation>
    <location>
        <position position="65"/>
    </location>
</feature>
<feature type="sequence conflict" description="In Ref. 2; AAA93473." evidence="3" ref="2">
    <original>D</original>
    <variation>G</variation>
    <location>
        <position position="74"/>
    </location>
</feature>
<feature type="sequence conflict" description="In Ref. 2; AAA93473." evidence="3" ref="2">
    <original>S</original>
    <variation>D</variation>
    <location>
        <position position="88"/>
    </location>
</feature>
<feature type="sequence conflict" description="In Ref. 2; AAA93473." evidence="3" ref="2">
    <original>P</original>
    <variation>T</variation>
    <location>
        <position position="196"/>
    </location>
</feature>
<organism>
    <name type="scientific">Anopheles gambiae</name>
    <name type="common">African malaria mosquito</name>
    <dbReference type="NCBI Taxonomy" id="7165"/>
    <lineage>
        <taxon>Eukaryota</taxon>
        <taxon>Metazoa</taxon>
        <taxon>Ecdysozoa</taxon>
        <taxon>Arthropoda</taxon>
        <taxon>Hexapoda</taxon>
        <taxon>Insecta</taxon>
        <taxon>Pterygota</taxon>
        <taxon>Neoptera</taxon>
        <taxon>Endopterygota</taxon>
        <taxon>Diptera</taxon>
        <taxon>Nematocera</taxon>
        <taxon>Culicoidea</taxon>
        <taxon>Culicidae</taxon>
        <taxon>Anophelinae</taxon>
        <taxon>Anopheles</taxon>
    </lineage>
</organism>
<evidence type="ECO:0000255" key="1">
    <source>
        <dbReference type="PROSITE-ProRule" id="PRU00497"/>
    </source>
</evidence>
<evidence type="ECO:0000256" key="2">
    <source>
        <dbReference type="SAM" id="MobiDB-lite"/>
    </source>
</evidence>
<evidence type="ECO:0000305" key="3"/>
<dbReference type="EMBL" id="AAAB01008987">
    <property type="protein sequence ID" value="EAL38558.2"/>
    <property type="molecule type" value="Genomic_DNA"/>
</dbReference>
<dbReference type="EMBL" id="U50469">
    <property type="protein sequence ID" value="AAA93473.1"/>
    <property type="status" value="ALT_FRAME"/>
    <property type="molecule type" value="mRNA"/>
</dbReference>
<dbReference type="RefSeq" id="XP_551139.2">
    <property type="nucleotide sequence ID" value="XM_551139.4"/>
</dbReference>
<dbReference type="FunCoup" id="Q17015">
    <property type="interactions" value="89"/>
</dbReference>
<dbReference type="PaxDb" id="7165-AGAP001666-PA"/>
<dbReference type="EnsemblMetazoa" id="AGAP001666-RA">
    <property type="protein sequence ID" value="AGAP001666-PA"/>
    <property type="gene ID" value="AGAP001666"/>
</dbReference>
<dbReference type="VEuPathDB" id="VectorBase:AGAMI1_002435"/>
<dbReference type="VEuPathDB" id="VectorBase:AGAP001666"/>
<dbReference type="eggNOG" id="ENOG502S21C">
    <property type="taxonomic scope" value="Eukaryota"/>
</dbReference>
<dbReference type="HOGENOM" id="CLU_075165_1_0_1"/>
<dbReference type="InParanoid" id="Q17015"/>
<dbReference type="OMA" id="THSTMAF"/>
<dbReference type="PhylomeDB" id="Q17015"/>
<dbReference type="Proteomes" id="UP000007062">
    <property type="component" value="Chromosome 2R"/>
</dbReference>
<dbReference type="GO" id="GO:0031012">
    <property type="term" value="C:extracellular matrix"/>
    <property type="evidence" value="ECO:0000318"/>
    <property type="project" value="GO_Central"/>
</dbReference>
<dbReference type="GO" id="GO:0042302">
    <property type="term" value="F:structural constituent of cuticle"/>
    <property type="evidence" value="ECO:0007669"/>
    <property type="project" value="UniProtKB-KW"/>
</dbReference>
<dbReference type="InterPro" id="IPR031311">
    <property type="entry name" value="CHIT_BIND_RR_consensus"/>
</dbReference>
<dbReference type="InterPro" id="IPR000618">
    <property type="entry name" value="Insect_cuticle"/>
</dbReference>
<dbReference type="InterPro" id="IPR051217">
    <property type="entry name" value="Insect_Cuticle_Struc_Prot"/>
</dbReference>
<dbReference type="PANTHER" id="PTHR12236:SF86">
    <property type="entry name" value="CCP84AC-RELATED"/>
    <property type="match status" value="1"/>
</dbReference>
<dbReference type="PANTHER" id="PTHR12236">
    <property type="entry name" value="STRUCTURAL CONTITUENT OF CUTICLE"/>
    <property type="match status" value="1"/>
</dbReference>
<dbReference type="Pfam" id="PF00379">
    <property type="entry name" value="Chitin_bind_4"/>
    <property type="match status" value="1"/>
</dbReference>
<dbReference type="PRINTS" id="PR00947">
    <property type="entry name" value="CUTICLE"/>
</dbReference>
<dbReference type="PROSITE" id="PS00233">
    <property type="entry name" value="CHIT_BIND_RR_1"/>
    <property type="match status" value="1"/>
</dbReference>
<dbReference type="PROSITE" id="PS51155">
    <property type="entry name" value="CHIT_BIND_RR_2"/>
    <property type="match status" value="1"/>
</dbReference>
<keyword id="KW-0193">Cuticle</keyword>
<keyword id="KW-1185">Reference proteome</keyword>
<keyword id="KW-0677">Repeat</keyword>
<protein>
    <recommendedName>
        <fullName>Cuticle protein</fullName>
    </recommendedName>
</protein>
<comment type="function">
    <text>Component of the cuticle of African malaria mosquito.</text>
</comment>
<comment type="domain">
    <text>The tetrapeptide (A-A-P-[AV]) repeats found throughout the protein are also present in many proteins constituting the protective envelope of other species.</text>
</comment>
<comment type="sequence caution" evidence="3">
    <conflict type="frameshift">
        <sequence resource="EMBL-CDS" id="AAA93473"/>
    </conflict>
</comment>
<accession>Q17015</accession>
<accession>Q380K4</accession>
<reference key="1">
    <citation type="journal article" date="2002" name="Science">
        <title>The genome sequence of the malaria mosquito Anopheles gambiae.</title>
        <authorList>
            <person name="Holt R.A."/>
            <person name="Subramanian G.M."/>
            <person name="Halpern A."/>
            <person name="Sutton G.G."/>
            <person name="Charlab R."/>
            <person name="Nusskern D.R."/>
            <person name="Wincker P."/>
            <person name="Clark A.G."/>
            <person name="Ribeiro J.M.C."/>
            <person name="Wides R."/>
            <person name="Salzberg S.L."/>
            <person name="Loftus B.J."/>
            <person name="Yandell M.D."/>
            <person name="Majoros W.H."/>
            <person name="Rusch D.B."/>
            <person name="Lai Z."/>
            <person name="Kraft C.L."/>
            <person name="Abril J.F."/>
            <person name="Anthouard V."/>
            <person name="Arensburger P."/>
            <person name="Atkinson P.W."/>
            <person name="Baden H."/>
            <person name="de Berardinis V."/>
            <person name="Baldwin D."/>
            <person name="Benes V."/>
            <person name="Biedler J."/>
            <person name="Blass C."/>
            <person name="Bolanos R."/>
            <person name="Boscus D."/>
            <person name="Barnstead M."/>
            <person name="Cai S."/>
            <person name="Center A."/>
            <person name="Chaturverdi K."/>
            <person name="Christophides G.K."/>
            <person name="Chrystal M.A.M."/>
            <person name="Clamp M."/>
            <person name="Cravchik A."/>
            <person name="Curwen V."/>
            <person name="Dana A."/>
            <person name="Delcher A."/>
            <person name="Dew I."/>
            <person name="Evans C.A."/>
            <person name="Flanigan M."/>
            <person name="Grundschober-Freimoser A."/>
            <person name="Friedli L."/>
            <person name="Gu Z."/>
            <person name="Guan P."/>
            <person name="Guigo R."/>
            <person name="Hillenmeyer M.E."/>
            <person name="Hladun S.L."/>
            <person name="Hogan J.R."/>
            <person name="Hong Y.S."/>
            <person name="Hoover J."/>
            <person name="Jaillon O."/>
            <person name="Ke Z."/>
            <person name="Kodira C.D."/>
            <person name="Kokoza E."/>
            <person name="Koutsos A."/>
            <person name="Letunic I."/>
            <person name="Levitsky A.A."/>
            <person name="Liang Y."/>
            <person name="Lin J.-J."/>
            <person name="Lobo N.F."/>
            <person name="Lopez J.R."/>
            <person name="Malek J.A."/>
            <person name="McIntosh T.C."/>
            <person name="Meister S."/>
            <person name="Miller J.R."/>
            <person name="Mobarry C."/>
            <person name="Mongin E."/>
            <person name="Murphy S.D."/>
            <person name="O'Brochta D.A."/>
            <person name="Pfannkoch C."/>
            <person name="Qi R."/>
            <person name="Regier M.A."/>
            <person name="Remington K."/>
            <person name="Shao H."/>
            <person name="Sharakhova M.V."/>
            <person name="Sitter C.D."/>
            <person name="Shetty J."/>
            <person name="Smith T.J."/>
            <person name="Strong R."/>
            <person name="Sun J."/>
            <person name="Thomasova D."/>
            <person name="Ton L.Q."/>
            <person name="Topalis P."/>
            <person name="Tu Z.J."/>
            <person name="Unger M.F."/>
            <person name="Walenz B."/>
            <person name="Wang A.H."/>
            <person name="Wang J."/>
            <person name="Wang M."/>
            <person name="Wang X."/>
            <person name="Woodford K.J."/>
            <person name="Wortman J.R."/>
            <person name="Wu M."/>
            <person name="Yao A."/>
            <person name="Zdobnov E.M."/>
            <person name="Zhang H."/>
            <person name="Zhao Q."/>
            <person name="Zhao S."/>
            <person name="Zhu S.C."/>
            <person name="Zhimulev I."/>
            <person name="Coluzzi M."/>
            <person name="della Torre A."/>
            <person name="Roth C.W."/>
            <person name="Louis C."/>
            <person name="Kalush F."/>
            <person name="Mural R.J."/>
            <person name="Myers E.W."/>
            <person name="Adams M.D."/>
            <person name="Smith H.O."/>
            <person name="Broder S."/>
            <person name="Gardner M.J."/>
            <person name="Fraser C.M."/>
            <person name="Birney E."/>
            <person name="Bork P."/>
            <person name="Brey P.T."/>
            <person name="Venter J.C."/>
            <person name="Weissenbach J."/>
            <person name="Kafatos F.C."/>
            <person name="Collins F.H."/>
            <person name="Hoffman S.L."/>
        </authorList>
    </citation>
    <scope>NUCLEOTIDE SEQUENCE [LARGE SCALE GENOMIC DNA]</scope>
    <source>
        <strain>PEST</strain>
    </source>
</reference>
<reference key="2">
    <citation type="journal article" date="1996" name="Genetics">
        <title>Physical map of the malaria vector Anopheles gambiae.</title>
        <authorList>
            <person name="della Torre A."/>
            <person name="Favia G."/>
            <person name="Mariotti G."/>
            <person name="Coluzzi M."/>
            <person name="Mathiopoulos K.D."/>
        </authorList>
    </citation>
    <scope>NUCLEOTIDE SEQUENCE [MRNA] OF 1-203</scope>
    <source>
        <strain>Gasua</strain>
        <tissue>Ovary</tissue>
    </source>
</reference>
<name>CU01_ANOGA</name>